<accession>A7FUK9</accession>
<sequence>MRKINLLDLETTNKIAAGEVIERPFSVVKELVENSIDAGAKNITIEIEDGGQKLIKIIDDGEGIYPIDIKNAFLPHATSKINSIEDIYKISTMGFRGEALASISSVSKTKLKSRVDSYNFGKEIYIEGGKIEYLKDTGCNVGTTIEVSDLFYNVPARLKFLKSARSDSSSISDIVNRFILSHPDISFNLINKGKQSIKSYGTGNLKDSIRCVYNKTISENLINFESHKDIISVYGFIGKPEISRKSRTNQSIFVNKRYVKSKFITAAVENAFKSFLTVNSYPFFVIFIDIFPEYIDVNVHPTKSEVKFKDERAMFKTIFDAVHEAIKGELKESFTNFFNKEDINIYDSEKSITEPIKLEKEEVQIPIDLNSNNKIDIFGNNINKLPNNTELLKNIGIKEKNTLENNNDFYTSKQNEIYYANKNDECLNSCNKDNYSKIEKSLQKDNKNPDILYLNEHNRNSSPINIKENKSNNFYVDMKIIGQFNNTYILIEKDKELYIIDQHAAHEKVLFEKFKCEIEKGYVISQILLSPVVIELSEDEFNIYEENKDIFKNSGFSVETFGEYTINIKEVPLILGKPNVENLFMDILYNLKNMKSKETSTIKYNAIATLACKSAVKANDNLKEEEIKKLIEDMLILNNPYTCPHGRPTMIKFTLKDLEKKFKRIQ</sequence>
<feature type="chain" id="PRO_1000010005" description="DNA mismatch repair protein MutL">
    <location>
        <begin position="1"/>
        <end position="666"/>
    </location>
</feature>
<organism>
    <name type="scientific">Clostridium botulinum (strain ATCC 19397 / Type A)</name>
    <dbReference type="NCBI Taxonomy" id="441770"/>
    <lineage>
        <taxon>Bacteria</taxon>
        <taxon>Bacillati</taxon>
        <taxon>Bacillota</taxon>
        <taxon>Clostridia</taxon>
        <taxon>Eubacteriales</taxon>
        <taxon>Clostridiaceae</taxon>
        <taxon>Clostridium</taxon>
    </lineage>
</organism>
<evidence type="ECO:0000255" key="1">
    <source>
        <dbReference type="HAMAP-Rule" id="MF_00149"/>
    </source>
</evidence>
<name>MUTL_CLOB1</name>
<comment type="function">
    <text evidence="1">This protein is involved in the repair of mismatches in DNA. It is required for dam-dependent methyl-directed DNA mismatch repair. May act as a 'molecular matchmaker', a protein that promotes the formation of a stable complex between two or more DNA-binding proteins in an ATP-dependent manner without itself being part of a final effector complex.</text>
</comment>
<comment type="similarity">
    <text evidence="1">Belongs to the DNA mismatch repair MutL/HexB family.</text>
</comment>
<protein>
    <recommendedName>
        <fullName evidence="1">DNA mismatch repair protein MutL</fullName>
    </recommendedName>
</protein>
<dbReference type="EMBL" id="CP000726">
    <property type="protein sequence ID" value="ABS35389.1"/>
    <property type="molecule type" value="Genomic_DNA"/>
</dbReference>
<dbReference type="RefSeq" id="WP_011986380.1">
    <property type="nucleotide sequence ID" value="NC_009697.1"/>
</dbReference>
<dbReference type="SMR" id="A7FUK9"/>
<dbReference type="KEGG" id="cba:CLB_1734"/>
<dbReference type="HOGENOM" id="CLU_004131_4_1_9"/>
<dbReference type="GO" id="GO:0032300">
    <property type="term" value="C:mismatch repair complex"/>
    <property type="evidence" value="ECO:0007669"/>
    <property type="project" value="InterPro"/>
</dbReference>
<dbReference type="GO" id="GO:0005524">
    <property type="term" value="F:ATP binding"/>
    <property type="evidence" value="ECO:0007669"/>
    <property type="project" value="InterPro"/>
</dbReference>
<dbReference type="GO" id="GO:0016887">
    <property type="term" value="F:ATP hydrolysis activity"/>
    <property type="evidence" value="ECO:0007669"/>
    <property type="project" value="InterPro"/>
</dbReference>
<dbReference type="GO" id="GO:0140664">
    <property type="term" value="F:ATP-dependent DNA damage sensor activity"/>
    <property type="evidence" value="ECO:0007669"/>
    <property type="project" value="InterPro"/>
</dbReference>
<dbReference type="GO" id="GO:0030983">
    <property type="term" value="F:mismatched DNA binding"/>
    <property type="evidence" value="ECO:0007669"/>
    <property type="project" value="InterPro"/>
</dbReference>
<dbReference type="GO" id="GO:0006298">
    <property type="term" value="P:mismatch repair"/>
    <property type="evidence" value="ECO:0007669"/>
    <property type="project" value="UniProtKB-UniRule"/>
</dbReference>
<dbReference type="CDD" id="cd16926">
    <property type="entry name" value="HATPase_MutL-MLH-PMS-like"/>
    <property type="match status" value="1"/>
</dbReference>
<dbReference type="CDD" id="cd00782">
    <property type="entry name" value="MutL_Trans"/>
    <property type="match status" value="1"/>
</dbReference>
<dbReference type="FunFam" id="3.30.565.10:FF:000003">
    <property type="entry name" value="DNA mismatch repair endonuclease MutL"/>
    <property type="match status" value="1"/>
</dbReference>
<dbReference type="Gene3D" id="3.30.230.10">
    <property type="match status" value="1"/>
</dbReference>
<dbReference type="Gene3D" id="3.30.565.10">
    <property type="entry name" value="Histidine kinase-like ATPase, C-terminal domain"/>
    <property type="match status" value="1"/>
</dbReference>
<dbReference type="Gene3D" id="3.30.1540.20">
    <property type="entry name" value="MutL, C-terminal domain, dimerisation subdomain"/>
    <property type="match status" value="1"/>
</dbReference>
<dbReference type="Gene3D" id="3.30.1370.100">
    <property type="entry name" value="MutL, C-terminal domain, regulatory subdomain"/>
    <property type="match status" value="1"/>
</dbReference>
<dbReference type="HAMAP" id="MF_00149">
    <property type="entry name" value="DNA_mis_repair"/>
    <property type="match status" value="1"/>
</dbReference>
<dbReference type="InterPro" id="IPR014762">
    <property type="entry name" value="DNA_mismatch_repair_CS"/>
</dbReference>
<dbReference type="InterPro" id="IPR020667">
    <property type="entry name" value="DNA_mismatch_repair_MutL"/>
</dbReference>
<dbReference type="InterPro" id="IPR013507">
    <property type="entry name" value="DNA_mismatch_S5_2-like"/>
</dbReference>
<dbReference type="InterPro" id="IPR036890">
    <property type="entry name" value="HATPase_C_sf"/>
</dbReference>
<dbReference type="InterPro" id="IPR002099">
    <property type="entry name" value="MutL/Mlh/PMS"/>
</dbReference>
<dbReference type="InterPro" id="IPR038973">
    <property type="entry name" value="MutL/Mlh/Pms-like"/>
</dbReference>
<dbReference type="InterPro" id="IPR014790">
    <property type="entry name" value="MutL_C"/>
</dbReference>
<dbReference type="InterPro" id="IPR042120">
    <property type="entry name" value="MutL_C_dimsub"/>
</dbReference>
<dbReference type="InterPro" id="IPR042121">
    <property type="entry name" value="MutL_C_regsub"/>
</dbReference>
<dbReference type="InterPro" id="IPR037198">
    <property type="entry name" value="MutL_C_sf"/>
</dbReference>
<dbReference type="InterPro" id="IPR020568">
    <property type="entry name" value="Ribosomal_Su5_D2-typ_SF"/>
</dbReference>
<dbReference type="InterPro" id="IPR014721">
    <property type="entry name" value="Ribsml_uS5_D2-typ_fold_subgr"/>
</dbReference>
<dbReference type="NCBIfam" id="TIGR00585">
    <property type="entry name" value="mutl"/>
    <property type="match status" value="1"/>
</dbReference>
<dbReference type="PANTHER" id="PTHR10073">
    <property type="entry name" value="DNA MISMATCH REPAIR PROTEIN MLH, PMS, MUTL"/>
    <property type="match status" value="1"/>
</dbReference>
<dbReference type="PANTHER" id="PTHR10073:SF12">
    <property type="entry name" value="DNA MISMATCH REPAIR PROTEIN MLH1"/>
    <property type="match status" value="1"/>
</dbReference>
<dbReference type="Pfam" id="PF01119">
    <property type="entry name" value="DNA_mis_repair"/>
    <property type="match status" value="1"/>
</dbReference>
<dbReference type="Pfam" id="PF13589">
    <property type="entry name" value="HATPase_c_3"/>
    <property type="match status" value="1"/>
</dbReference>
<dbReference type="Pfam" id="PF08676">
    <property type="entry name" value="MutL_C"/>
    <property type="match status" value="1"/>
</dbReference>
<dbReference type="SMART" id="SM01340">
    <property type="entry name" value="DNA_mis_repair"/>
    <property type="match status" value="1"/>
</dbReference>
<dbReference type="SMART" id="SM00853">
    <property type="entry name" value="MutL_C"/>
    <property type="match status" value="1"/>
</dbReference>
<dbReference type="SUPFAM" id="SSF55874">
    <property type="entry name" value="ATPase domain of HSP90 chaperone/DNA topoisomerase II/histidine kinase"/>
    <property type="match status" value="1"/>
</dbReference>
<dbReference type="SUPFAM" id="SSF118116">
    <property type="entry name" value="DNA mismatch repair protein MutL"/>
    <property type="match status" value="1"/>
</dbReference>
<dbReference type="SUPFAM" id="SSF54211">
    <property type="entry name" value="Ribosomal protein S5 domain 2-like"/>
    <property type="match status" value="1"/>
</dbReference>
<dbReference type="PROSITE" id="PS00058">
    <property type="entry name" value="DNA_MISMATCH_REPAIR_1"/>
    <property type="match status" value="1"/>
</dbReference>
<proteinExistence type="inferred from homology"/>
<gene>
    <name evidence="1" type="primary">mutL</name>
    <name type="ordered locus">CLB_1734</name>
</gene>
<keyword id="KW-0227">DNA damage</keyword>
<keyword id="KW-0234">DNA repair</keyword>
<reference key="1">
    <citation type="journal article" date="2007" name="PLoS ONE">
        <title>Analysis of the neurotoxin complex genes in Clostridium botulinum A1-A4 and B1 strains: BoNT/A3, /Ba4 and /B1 clusters are located within plasmids.</title>
        <authorList>
            <person name="Smith T.J."/>
            <person name="Hill K.K."/>
            <person name="Foley B.T."/>
            <person name="Detter J.C."/>
            <person name="Munk A.C."/>
            <person name="Bruce D.C."/>
            <person name="Doggett N.A."/>
            <person name="Smith L.A."/>
            <person name="Marks J.D."/>
            <person name="Xie G."/>
            <person name="Brettin T.S."/>
        </authorList>
    </citation>
    <scope>NUCLEOTIDE SEQUENCE [LARGE SCALE GENOMIC DNA]</scope>
    <source>
        <strain>ATCC 19397 / Type A</strain>
    </source>
</reference>